<reference key="1">
    <citation type="journal article" date="2003" name="Science">
        <title>Role of mobile DNA in the evolution of vancomycin-resistant Enterococcus faecalis.</title>
        <authorList>
            <person name="Paulsen I.T."/>
            <person name="Banerjei L."/>
            <person name="Myers G.S.A."/>
            <person name="Nelson K.E."/>
            <person name="Seshadri R."/>
            <person name="Read T.D."/>
            <person name="Fouts D.E."/>
            <person name="Eisen J.A."/>
            <person name="Gill S.R."/>
            <person name="Heidelberg J.F."/>
            <person name="Tettelin H."/>
            <person name="Dodson R.J."/>
            <person name="Umayam L.A."/>
            <person name="Brinkac L.M."/>
            <person name="Beanan M.J."/>
            <person name="Daugherty S.C."/>
            <person name="DeBoy R.T."/>
            <person name="Durkin S.A."/>
            <person name="Kolonay J.F."/>
            <person name="Madupu R."/>
            <person name="Nelson W.C."/>
            <person name="Vamathevan J.J."/>
            <person name="Tran B."/>
            <person name="Upton J."/>
            <person name="Hansen T."/>
            <person name="Shetty J."/>
            <person name="Khouri H.M."/>
            <person name="Utterback T.R."/>
            <person name="Radune D."/>
            <person name="Ketchum K.A."/>
            <person name="Dougherty B.A."/>
            <person name="Fraser C.M."/>
        </authorList>
    </citation>
    <scope>NUCLEOTIDE SEQUENCE [LARGE SCALE GENOMIC DNA]</scope>
    <source>
        <strain>ATCC 700802 / V583</strain>
    </source>
</reference>
<gene>
    <name evidence="1" type="primary">trpS</name>
    <name type="ordered locus">EF_2679</name>
</gene>
<feature type="chain" id="PRO_0000136631" description="Tryptophan--tRNA ligase">
    <location>
        <begin position="1"/>
        <end position="336"/>
    </location>
</feature>
<feature type="short sequence motif" description="'HIGH' region" evidence="1">
    <location>
        <begin position="10"/>
        <end position="18"/>
    </location>
</feature>
<feature type="short sequence motif" description="'KMSKS' region" evidence="1">
    <location>
        <begin position="198"/>
        <end position="202"/>
    </location>
</feature>
<feature type="binding site" evidence="1">
    <location>
        <begin position="9"/>
        <end position="11"/>
    </location>
    <ligand>
        <name>ATP</name>
        <dbReference type="ChEBI" id="CHEBI:30616"/>
    </ligand>
</feature>
<feature type="binding site" evidence="1">
    <location>
        <begin position="17"/>
        <end position="18"/>
    </location>
    <ligand>
        <name>ATP</name>
        <dbReference type="ChEBI" id="CHEBI:30616"/>
    </ligand>
</feature>
<feature type="binding site" evidence="1">
    <location>
        <position position="134"/>
    </location>
    <ligand>
        <name>L-tryptophan</name>
        <dbReference type="ChEBI" id="CHEBI:57912"/>
    </ligand>
</feature>
<feature type="binding site" evidence="1">
    <location>
        <begin position="146"/>
        <end position="148"/>
    </location>
    <ligand>
        <name>ATP</name>
        <dbReference type="ChEBI" id="CHEBI:30616"/>
    </ligand>
</feature>
<feature type="binding site" evidence="1">
    <location>
        <position position="189"/>
    </location>
    <ligand>
        <name>ATP</name>
        <dbReference type="ChEBI" id="CHEBI:30616"/>
    </ligand>
</feature>
<feature type="binding site" evidence="1">
    <location>
        <begin position="198"/>
        <end position="202"/>
    </location>
    <ligand>
        <name>ATP</name>
        <dbReference type="ChEBI" id="CHEBI:30616"/>
    </ligand>
</feature>
<sequence length="336" mass="37446">MKTIFSGIQPSGTPTIGNYIGAMKQFIELQNEYNCYFCIVDEHAITVPQEPQKLRQQIRSLAALYLAVGLDPQKATIFIQSEVSAHAEAGWIIQCNTSIGELERMTQFKDKSQKNGRAGVSAGLLTYPPLMVGDIVLYNADLVPVGDDQKQHLELTRDFVERFNKRYAQKNQEILTIPEVKIAEQGSRIMSLQEPTKKMSKSDTNVKGFISMLDEPAVIRKKIRSAVTDSTGVIEYNKEEKPGITNLLNIYSAATGQTVEELVQAYEGKGYGDFKADLAEAVVALLEPIQVRYQELLASEELDMILDEGAENARLVANKTLQRMKNAVGLGRKVRR</sequence>
<organism>
    <name type="scientific">Enterococcus faecalis (strain ATCC 700802 / V583)</name>
    <dbReference type="NCBI Taxonomy" id="226185"/>
    <lineage>
        <taxon>Bacteria</taxon>
        <taxon>Bacillati</taxon>
        <taxon>Bacillota</taxon>
        <taxon>Bacilli</taxon>
        <taxon>Lactobacillales</taxon>
        <taxon>Enterococcaceae</taxon>
        <taxon>Enterococcus</taxon>
    </lineage>
</organism>
<dbReference type="EC" id="6.1.1.2" evidence="1"/>
<dbReference type="EMBL" id="AE016830">
    <property type="protein sequence ID" value="AAO82384.1"/>
    <property type="molecule type" value="Genomic_DNA"/>
</dbReference>
<dbReference type="RefSeq" id="NP_816314.1">
    <property type="nucleotide sequence ID" value="NC_004668.1"/>
</dbReference>
<dbReference type="RefSeq" id="WP_002378619.1">
    <property type="nucleotide sequence ID" value="NZ_KE136528.1"/>
</dbReference>
<dbReference type="SMR" id="Q830U2"/>
<dbReference type="STRING" id="226185.EF_2679"/>
<dbReference type="EnsemblBacteria" id="AAO82384">
    <property type="protein sequence ID" value="AAO82384"/>
    <property type="gene ID" value="EF_2679"/>
</dbReference>
<dbReference type="KEGG" id="efa:EF2679"/>
<dbReference type="PATRIC" id="fig|226185.45.peg.883"/>
<dbReference type="eggNOG" id="COG0180">
    <property type="taxonomic scope" value="Bacteria"/>
</dbReference>
<dbReference type="HOGENOM" id="CLU_029244_1_1_9"/>
<dbReference type="Proteomes" id="UP000001415">
    <property type="component" value="Chromosome"/>
</dbReference>
<dbReference type="GO" id="GO:0005829">
    <property type="term" value="C:cytosol"/>
    <property type="evidence" value="ECO:0007669"/>
    <property type="project" value="TreeGrafter"/>
</dbReference>
<dbReference type="GO" id="GO:0005524">
    <property type="term" value="F:ATP binding"/>
    <property type="evidence" value="ECO:0007669"/>
    <property type="project" value="UniProtKB-UniRule"/>
</dbReference>
<dbReference type="GO" id="GO:0004830">
    <property type="term" value="F:tryptophan-tRNA ligase activity"/>
    <property type="evidence" value="ECO:0007669"/>
    <property type="project" value="UniProtKB-UniRule"/>
</dbReference>
<dbReference type="GO" id="GO:0006436">
    <property type="term" value="P:tryptophanyl-tRNA aminoacylation"/>
    <property type="evidence" value="ECO:0007669"/>
    <property type="project" value="UniProtKB-UniRule"/>
</dbReference>
<dbReference type="CDD" id="cd00806">
    <property type="entry name" value="TrpRS_core"/>
    <property type="match status" value="1"/>
</dbReference>
<dbReference type="FunFam" id="1.10.240.10:FF:000002">
    <property type="entry name" value="Tryptophan--tRNA ligase"/>
    <property type="match status" value="1"/>
</dbReference>
<dbReference type="Gene3D" id="3.40.50.620">
    <property type="entry name" value="HUPs"/>
    <property type="match status" value="1"/>
</dbReference>
<dbReference type="Gene3D" id="1.10.240.10">
    <property type="entry name" value="Tyrosyl-Transfer RNA Synthetase"/>
    <property type="match status" value="1"/>
</dbReference>
<dbReference type="HAMAP" id="MF_00140_B">
    <property type="entry name" value="Trp_tRNA_synth_B"/>
    <property type="match status" value="1"/>
</dbReference>
<dbReference type="InterPro" id="IPR001412">
    <property type="entry name" value="aa-tRNA-synth_I_CS"/>
</dbReference>
<dbReference type="InterPro" id="IPR002305">
    <property type="entry name" value="aa-tRNA-synth_Ic"/>
</dbReference>
<dbReference type="InterPro" id="IPR014729">
    <property type="entry name" value="Rossmann-like_a/b/a_fold"/>
</dbReference>
<dbReference type="InterPro" id="IPR002306">
    <property type="entry name" value="Trp-tRNA-ligase"/>
</dbReference>
<dbReference type="InterPro" id="IPR024109">
    <property type="entry name" value="Trp-tRNA-ligase_bac-type"/>
</dbReference>
<dbReference type="InterPro" id="IPR050203">
    <property type="entry name" value="Trp-tRNA_synthetase"/>
</dbReference>
<dbReference type="NCBIfam" id="TIGR00233">
    <property type="entry name" value="trpS"/>
    <property type="match status" value="1"/>
</dbReference>
<dbReference type="PANTHER" id="PTHR43766">
    <property type="entry name" value="TRYPTOPHAN--TRNA LIGASE, MITOCHONDRIAL"/>
    <property type="match status" value="1"/>
</dbReference>
<dbReference type="PANTHER" id="PTHR43766:SF1">
    <property type="entry name" value="TRYPTOPHAN--TRNA LIGASE, MITOCHONDRIAL"/>
    <property type="match status" value="1"/>
</dbReference>
<dbReference type="Pfam" id="PF00579">
    <property type="entry name" value="tRNA-synt_1b"/>
    <property type="match status" value="1"/>
</dbReference>
<dbReference type="PRINTS" id="PR01039">
    <property type="entry name" value="TRNASYNTHTRP"/>
</dbReference>
<dbReference type="SUPFAM" id="SSF52374">
    <property type="entry name" value="Nucleotidylyl transferase"/>
    <property type="match status" value="1"/>
</dbReference>
<dbReference type="PROSITE" id="PS00178">
    <property type="entry name" value="AA_TRNA_LIGASE_I"/>
    <property type="match status" value="1"/>
</dbReference>
<name>SYW_ENTFA</name>
<keyword id="KW-0030">Aminoacyl-tRNA synthetase</keyword>
<keyword id="KW-0067">ATP-binding</keyword>
<keyword id="KW-0963">Cytoplasm</keyword>
<keyword id="KW-0436">Ligase</keyword>
<keyword id="KW-0547">Nucleotide-binding</keyword>
<keyword id="KW-0648">Protein biosynthesis</keyword>
<keyword id="KW-1185">Reference proteome</keyword>
<evidence type="ECO:0000255" key="1">
    <source>
        <dbReference type="HAMAP-Rule" id="MF_00140"/>
    </source>
</evidence>
<comment type="function">
    <text evidence="1">Catalyzes the attachment of tryptophan to tRNA(Trp).</text>
</comment>
<comment type="catalytic activity">
    <reaction evidence="1">
        <text>tRNA(Trp) + L-tryptophan + ATP = L-tryptophyl-tRNA(Trp) + AMP + diphosphate + H(+)</text>
        <dbReference type="Rhea" id="RHEA:24080"/>
        <dbReference type="Rhea" id="RHEA-COMP:9671"/>
        <dbReference type="Rhea" id="RHEA-COMP:9705"/>
        <dbReference type="ChEBI" id="CHEBI:15378"/>
        <dbReference type="ChEBI" id="CHEBI:30616"/>
        <dbReference type="ChEBI" id="CHEBI:33019"/>
        <dbReference type="ChEBI" id="CHEBI:57912"/>
        <dbReference type="ChEBI" id="CHEBI:78442"/>
        <dbReference type="ChEBI" id="CHEBI:78535"/>
        <dbReference type="ChEBI" id="CHEBI:456215"/>
        <dbReference type="EC" id="6.1.1.2"/>
    </reaction>
</comment>
<comment type="subunit">
    <text evidence="1">Homodimer.</text>
</comment>
<comment type="subcellular location">
    <subcellularLocation>
        <location evidence="1">Cytoplasm</location>
    </subcellularLocation>
</comment>
<comment type="similarity">
    <text evidence="1">Belongs to the class-I aminoacyl-tRNA synthetase family.</text>
</comment>
<accession>Q830U2</accession>
<proteinExistence type="inferred from homology"/>
<protein>
    <recommendedName>
        <fullName evidence="1">Tryptophan--tRNA ligase</fullName>
        <ecNumber evidence="1">6.1.1.2</ecNumber>
    </recommendedName>
    <alternativeName>
        <fullName evidence="1">Tryptophanyl-tRNA synthetase</fullName>
        <shortName evidence="1">TrpRS</shortName>
    </alternativeName>
</protein>